<evidence type="ECO:0000255" key="1">
    <source>
        <dbReference type="HAMAP-Rule" id="MF_00201"/>
    </source>
</evidence>
<gene>
    <name evidence="1" type="primary">recO</name>
    <name type="ordered locus">YPDSF_1551</name>
</gene>
<proteinExistence type="inferred from homology"/>
<dbReference type="EMBL" id="CP000668">
    <property type="protein sequence ID" value="ABP39938.1"/>
    <property type="molecule type" value="Genomic_DNA"/>
</dbReference>
<dbReference type="RefSeq" id="WP_002209680.1">
    <property type="nucleotide sequence ID" value="NZ_CP009715.1"/>
</dbReference>
<dbReference type="SMR" id="A4TKX6"/>
<dbReference type="GeneID" id="57975971"/>
<dbReference type="KEGG" id="ypp:YPDSF_1551"/>
<dbReference type="PATRIC" id="fig|386656.14.peg.2220"/>
<dbReference type="GO" id="GO:0043590">
    <property type="term" value="C:bacterial nucleoid"/>
    <property type="evidence" value="ECO:0007669"/>
    <property type="project" value="TreeGrafter"/>
</dbReference>
<dbReference type="GO" id="GO:0006310">
    <property type="term" value="P:DNA recombination"/>
    <property type="evidence" value="ECO:0007669"/>
    <property type="project" value="UniProtKB-UniRule"/>
</dbReference>
<dbReference type="GO" id="GO:0006302">
    <property type="term" value="P:double-strand break repair"/>
    <property type="evidence" value="ECO:0007669"/>
    <property type="project" value="TreeGrafter"/>
</dbReference>
<dbReference type="Gene3D" id="2.40.50.140">
    <property type="entry name" value="Nucleic acid-binding proteins"/>
    <property type="match status" value="1"/>
</dbReference>
<dbReference type="Gene3D" id="1.20.1440.120">
    <property type="entry name" value="Recombination protein O, C-terminal domain"/>
    <property type="match status" value="1"/>
</dbReference>
<dbReference type="HAMAP" id="MF_00201">
    <property type="entry name" value="RecO"/>
    <property type="match status" value="1"/>
</dbReference>
<dbReference type="InterPro" id="IPR037278">
    <property type="entry name" value="ARFGAP/RecO"/>
</dbReference>
<dbReference type="InterPro" id="IPR022572">
    <property type="entry name" value="DNA_rep/recomb_RecO_N"/>
</dbReference>
<dbReference type="InterPro" id="IPR012340">
    <property type="entry name" value="NA-bd_OB-fold"/>
</dbReference>
<dbReference type="InterPro" id="IPR003717">
    <property type="entry name" value="RecO"/>
</dbReference>
<dbReference type="InterPro" id="IPR042242">
    <property type="entry name" value="RecO_C"/>
</dbReference>
<dbReference type="NCBIfam" id="TIGR00613">
    <property type="entry name" value="reco"/>
    <property type="match status" value="1"/>
</dbReference>
<dbReference type="PANTHER" id="PTHR33991">
    <property type="entry name" value="DNA REPAIR PROTEIN RECO"/>
    <property type="match status" value="1"/>
</dbReference>
<dbReference type="PANTHER" id="PTHR33991:SF1">
    <property type="entry name" value="DNA REPAIR PROTEIN RECO"/>
    <property type="match status" value="1"/>
</dbReference>
<dbReference type="Pfam" id="PF02565">
    <property type="entry name" value="RecO_C"/>
    <property type="match status" value="1"/>
</dbReference>
<dbReference type="Pfam" id="PF11967">
    <property type="entry name" value="RecO_N"/>
    <property type="match status" value="1"/>
</dbReference>
<dbReference type="SUPFAM" id="SSF57863">
    <property type="entry name" value="ArfGap/RecO-like zinc finger"/>
    <property type="match status" value="1"/>
</dbReference>
<dbReference type="SUPFAM" id="SSF50249">
    <property type="entry name" value="Nucleic acid-binding proteins"/>
    <property type="match status" value="1"/>
</dbReference>
<reference key="1">
    <citation type="submission" date="2007-02" db="EMBL/GenBank/DDBJ databases">
        <title>Complete sequence of chromosome of Yersinia pestis Pestoides F.</title>
        <authorList>
            <consortium name="US DOE Joint Genome Institute"/>
            <person name="Copeland A."/>
            <person name="Lucas S."/>
            <person name="Lapidus A."/>
            <person name="Barry K."/>
            <person name="Detter J.C."/>
            <person name="Glavina del Rio T."/>
            <person name="Hammon N."/>
            <person name="Israni S."/>
            <person name="Dalin E."/>
            <person name="Tice H."/>
            <person name="Pitluck S."/>
            <person name="Di Bartolo G."/>
            <person name="Chain P."/>
            <person name="Malfatti S."/>
            <person name="Shin M."/>
            <person name="Vergez L."/>
            <person name="Schmutz J."/>
            <person name="Larimer F."/>
            <person name="Land M."/>
            <person name="Hauser L."/>
            <person name="Worsham P."/>
            <person name="Chu M."/>
            <person name="Bearden S."/>
            <person name="Garcia E."/>
            <person name="Richardson P."/>
        </authorList>
    </citation>
    <scope>NUCLEOTIDE SEQUENCE [LARGE SCALE GENOMIC DNA]</scope>
    <source>
        <strain>Pestoides F</strain>
    </source>
</reference>
<protein>
    <recommendedName>
        <fullName evidence="1">DNA repair protein RecO</fullName>
    </recommendedName>
    <alternativeName>
        <fullName evidence="1">Recombination protein O</fullName>
    </alternativeName>
</protein>
<sequence>MDGWQRAFVLHGRPYSETSLMLDLFTEGEGRMRVLAKGARGRRSNLKGCLQPFTPLLVRWSGRGEVKTLRSAEPVSLALPLSGSMLYSGLYVNELLSRVLEHQTSYSALFFDYLHCLQALAGSDGSPEHALRQFELAMLANLGYGVDFLHCAGSGQPVSDTMTYRYREEKGFIASLVVDHYSFTGRQLLALANREFPDADTLRAAKRFTRIALKPYLGGKPLKSRELFRQFVIKPPADPSP</sequence>
<name>RECO_YERPP</name>
<keyword id="KW-0227">DNA damage</keyword>
<keyword id="KW-0233">DNA recombination</keyword>
<keyword id="KW-0234">DNA repair</keyword>
<feature type="chain" id="PRO_1000012166" description="DNA repair protein RecO">
    <location>
        <begin position="1"/>
        <end position="241"/>
    </location>
</feature>
<accession>A4TKX6</accession>
<organism>
    <name type="scientific">Yersinia pestis (strain Pestoides F)</name>
    <dbReference type="NCBI Taxonomy" id="386656"/>
    <lineage>
        <taxon>Bacteria</taxon>
        <taxon>Pseudomonadati</taxon>
        <taxon>Pseudomonadota</taxon>
        <taxon>Gammaproteobacteria</taxon>
        <taxon>Enterobacterales</taxon>
        <taxon>Yersiniaceae</taxon>
        <taxon>Yersinia</taxon>
    </lineage>
</organism>
<comment type="function">
    <text evidence="1">Involved in DNA repair and RecF pathway recombination.</text>
</comment>
<comment type="similarity">
    <text evidence="1">Belongs to the RecO family.</text>
</comment>